<evidence type="ECO:0000255" key="1">
    <source>
        <dbReference type="HAMAP-Rule" id="MF_00303"/>
    </source>
</evidence>
<sequence length="445" mass="50911">MGITILKNEGLDFHARISTPLSEIDDDIQKELLDLTKKVKIAGFRAGKVPVSIVKKKYGTSVRNDIIERRINNSVNHVIKEHNLNIIGRPKIEELQNESDKALEFTVKIELLPKITIPDLKKISLDRPKLEVNSKDVEEQLEKLAALTKNYTKESKAKIKDGDQVTIDAIGYIKEKAFEDGKLNDFKVIIGSNALIPGFEKQLIGSKTGSKVDVNVTFPENYHAKDLAGKDARFVVQIKAVHTAEPTVIDDEFAKKFQSNSLEELRTHFTKQIENESEEAINTIMKMNLFDKLEKLLDFDVPESLLEQEKNILKSGTDKNEQDESLLKDKSSKEITAYYNKLALRRVRIGLLLAEYAKSKNLQLEPDDLRKVIMQQARNFPGQENMIFDFYKNNPRAIEGLKGPALEDKAVQYIFNHEIKLKEKKYTKEELEKYLEAEEQRITLI</sequence>
<gene>
    <name evidence="1" type="primary">tig</name>
    <name type="ordered locus">RC1306</name>
</gene>
<feature type="chain" id="PRO_0000179416" description="Trigger factor">
    <location>
        <begin position="1"/>
        <end position="445"/>
    </location>
</feature>
<feature type="domain" description="PPIase FKBP-type" evidence="1">
    <location>
        <begin position="162"/>
        <end position="247"/>
    </location>
</feature>
<comment type="function">
    <text evidence="1">Involved in protein export. Acts as a chaperone by maintaining the newly synthesized protein in an open conformation. Functions as a peptidyl-prolyl cis-trans isomerase.</text>
</comment>
<comment type="catalytic activity">
    <reaction evidence="1">
        <text>[protein]-peptidylproline (omega=180) = [protein]-peptidylproline (omega=0)</text>
        <dbReference type="Rhea" id="RHEA:16237"/>
        <dbReference type="Rhea" id="RHEA-COMP:10747"/>
        <dbReference type="Rhea" id="RHEA-COMP:10748"/>
        <dbReference type="ChEBI" id="CHEBI:83833"/>
        <dbReference type="ChEBI" id="CHEBI:83834"/>
        <dbReference type="EC" id="5.2.1.8"/>
    </reaction>
</comment>
<comment type="subcellular location">
    <subcellularLocation>
        <location>Cytoplasm</location>
    </subcellularLocation>
    <text evidence="1">About half TF is bound to the ribosome near the polypeptide exit tunnel while the other half is free in the cytoplasm.</text>
</comment>
<comment type="domain">
    <text evidence="1">Consists of 3 domains; the N-terminus binds the ribosome, the middle domain has PPIase activity, while the C-terminus has intrinsic chaperone activity on its own.</text>
</comment>
<comment type="similarity">
    <text evidence="1">Belongs to the FKBP-type PPIase family. Tig subfamily.</text>
</comment>
<proteinExistence type="inferred from homology"/>
<name>TIG_RICCN</name>
<protein>
    <recommendedName>
        <fullName evidence="1">Trigger factor</fullName>
        <shortName evidence="1">TF</shortName>
        <ecNumber evidence="1">5.2.1.8</ecNumber>
    </recommendedName>
    <alternativeName>
        <fullName evidence="1">PPIase</fullName>
    </alternativeName>
</protein>
<organism>
    <name type="scientific">Rickettsia conorii (strain ATCC VR-613 / Malish 7)</name>
    <dbReference type="NCBI Taxonomy" id="272944"/>
    <lineage>
        <taxon>Bacteria</taxon>
        <taxon>Pseudomonadati</taxon>
        <taxon>Pseudomonadota</taxon>
        <taxon>Alphaproteobacteria</taxon>
        <taxon>Rickettsiales</taxon>
        <taxon>Rickettsiaceae</taxon>
        <taxon>Rickettsieae</taxon>
        <taxon>Rickettsia</taxon>
        <taxon>spotted fever group</taxon>
    </lineage>
</organism>
<keyword id="KW-0131">Cell cycle</keyword>
<keyword id="KW-0132">Cell division</keyword>
<keyword id="KW-0143">Chaperone</keyword>
<keyword id="KW-0963">Cytoplasm</keyword>
<keyword id="KW-0413">Isomerase</keyword>
<keyword id="KW-0697">Rotamase</keyword>
<accession>Q92G20</accession>
<dbReference type="EC" id="5.2.1.8" evidence="1"/>
<dbReference type="EMBL" id="AE006914">
    <property type="protein sequence ID" value="AAL03844.1"/>
    <property type="molecule type" value="Genomic_DNA"/>
</dbReference>
<dbReference type="PIR" id="B97863">
    <property type="entry name" value="B97863"/>
</dbReference>
<dbReference type="RefSeq" id="WP_010977864.1">
    <property type="nucleotide sequence ID" value="NC_003103.1"/>
</dbReference>
<dbReference type="SMR" id="Q92G20"/>
<dbReference type="GeneID" id="928458"/>
<dbReference type="KEGG" id="rco:RC1306"/>
<dbReference type="PATRIC" id="fig|272944.4.peg.1499"/>
<dbReference type="HOGENOM" id="CLU_033058_2_2_5"/>
<dbReference type="Proteomes" id="UP000000816">
    <property type="component" value="Chromosome"/>
</dbReference>
<dbReference type="GO" id="GO:0005737">
    <property type="term" value="C:cytoplasm"/>
    <property type="evidence" value="ECO:0007669"/>
    <property type="project" value="UniProtKB-SubCell"/>
</dbReference>
<dbReference type="GO" id="GO:0003755">
    <property type="term" value="F:peptidyl-prolyl cis-trans isomerase activity"/>
    <property type="evidence" value="ECO:0007669"/>
    <property type="project" value="UniProtKB-UniRule"/>
</dbReference>
<dbReference type="GO" id="GO:0044183">
    <property type="term" value="F:protein folding chaperone"/>
    <property type="evidence" value="ECO:0007669"/>
    <property type="project" value="TreeGrafter"/>
</dbReference>
<dbReference type="GO" id="GO:0043022">
    <property type="term" value="F:ribosome binding"/>
    <property type="evidence" value="ECO:0007669"/>
    <property type="project" value="TreeGrafter"/>
</dbReference>
<dbReference type="GO" id="GO:0051083">
    <property type="term" value="P:'de novo' cotranslational protein folding"/>
    <property type="evidence" value="ECO:0007669"/>
    <property type="project" value="TreeGrafter"/>
</dbReference>
<dbReference type="GO" id="GO:0051301">
    <property type="term" value="P:cell division"/>
    <property type="evidence" value="ECO:0007669"/>
    <property type="project" value="UniProtKB-KW"/>
</dbReference>
<dbReference type="GO" id="GO:0061077">
    <property type="term" value="P:chaperone-mediated protein folding"/>
    <property type="evidence" value="ECO:0007669"/>
    <property type="project" value="TreeGrafter"/>
</dbReference>
<dbReference type="GO" id="GO:0015031">
    <property type="term" value="P:protein transport"/>
    <property type="evidence" value="ECO:0007669"/>
    <property type="project" value="UniProtKB-UniRule"/>
</dbReference>
<dbReference type="GO" id="GO:0043335">
    <property type="term" value="P:protein unfolding"/>
    <property type="evidence" value="ECO:0007669"/>
    <property type="project" value="TreeGrafter"/>
</dbReference>
<dbReference type="FunFam" id="3.10.50.40:FF:000001">
    <property type="entry name" value="Trigger factor"/>
    <property type="match status" value="1"/>
</dbReference>
<dbReference type="Gene3D" id="3.10.50.40">
    <property type="match status" value="1"/>
</dbReference>
<dbReference type="Gene3D" id="3.30.70.1050">
    <property type="entry name" value="Trigger factor ribosome-binding domain"/>
    <property type="match status" value="1"/>
</dbReference>
<dbReference type="Gene3D" id="1.10.3120.10">
    <property type="entry name" value="Trigger factor, C-terminal domain"/>
    <property type="match status" value="1"/>
</dbReference>
<dbReference type="HAMAP" id="MF_00303">
    <property type="entry name" value="Trigger_factor_Tig"/>
    <property type="match status" value="1"/>
</dbReference>
<dbReference type="InterPro" id="IPR046357">
    <property type="entry name" value="PPIase_dom_sf"/>
</dbReference>
<dbReference type="InterPro" id="IPR001179">
    <property type="entry name" value="PPIase_FKBP_dom"/>
</dbReference>
<dbReference type="InterPro" id="IPR005215">
    <property type="entry name" value="Trig_fac"/>
</dbReference>
<dbReference type="InterPro" id="IPR008880">
    <property type="entry name" value="Trigger_fac_C"/>
</dbReference>
<dbReference type="InterPro" id="IPR037041">
    <property type="entry name" value="Trigger_fac_C_sf"/>
</dbReference>
<dbReference type="InterPro" id="IPR008881">
    <property type="entry name" value="Trigger_fac_ribosome-bd_bac"/>
</dbReference>
<dbReference type="InterPro" id="IPR036611">
    <property type="entry name" value="Trigger_fac_ribosome-bd_sf"/>
</dbReference>
<dbReference type="InterPro" id="IPR027304">
    <property type="entry name" value="Trigger_fact/SurA_dom_sf"/>
</dbReference>
<dbReference type="NCBIfam" id="TIGR00115">
    <property type="entry name" value="tig"/>
    <property type="match status" value="1"/>
</dbReference>
<dbReference type="PANTHER" id="PTHR30560">
    <property type="entry name" value="TRIGGER FACTOR CHAPERONE AND PEPTIDYL-PROLYL CIS/TRANS ISOMERASE"/>
    <property type="match status" value="1"/>
</dbReference>
<dbReference type="PANTHER" id="PTHR30560:SF3">
    <property type="entry name" value="TRIGGER FACTOR-LIKE PROTEIN TIG, CHLOROPLASTIC"/>
    <property type="match status" value="1"/>
</dbReference>
<dbReference type="Pfam" id="PF00254">
    <property type="entry name" value="FKBP_C"/>
    <property type="match status" value="1"/>
</dbReference>
<dbReference type="Pfam" id="PF05698">
    <property type="entry name" value="Trigger_C"/>
    <property type="match status" value="1"/>
</dbReference>
<dbReference type="Pfam" id="PF05697">
    <property type="entry name" value="Trigger_N"/>
    <property type="match status" value="1"/>
</dbReference>
<dbReference type="PIRSF" id="PIRSF003095">
    <property type="entry name" value="Trigger_factor"/>
    <property type="match status" value="1"/>
</dbReference>
<dbReference type="SUPFAM" id="SSF54534">
    <property type="entry name" value="FKBP-like"/>
    <property type="match status" value="1"/>
</dbReference>
<dbReference type="SUPFAM" id="SSF109998">
    <property type="entry name" value="Triger factor/SurA peptide-binding domain-like"/>
    <property type="match status" value="1"/>
</dbReference>
<dbReference type="SUPFAM" id="SSF102735">
    <property type="entry name" value="Trigger factor ribosome-binding domain"/>
    <property type="match status" value="1"/>
</dbReference>
<dbReference type="PROSITE" id="PS50059">
    <property type="entry name" value="FKBP_PPIASE"/>
    <property type="match status" value="1"/>
</dbReference>
<reference key="1">
    <citation type="journal article" date="2001" name="Science">
        <title>Mechanisms of evolution in Rickettsia conorii and R. prowazekii.</title>
        <authorList>
            <person name="Ogata H."/>
            <person name="Audic S."/>
            <person name="Renesto-Audiffren P."/>
            <person name="Fournier P.-E."/>
            <person name="Barbe V."/>
            <person name="Samson D."/>
            <person name="Roux V."/>
            <person name="Cossart P."/>
            <person name="Weissenbach J."/>
            <person name="Claverie J.-M."/>
            <person name="Raoult D."/>
        </authorList>
    </citation>
    <scope>NUCLEOTIDE SEQUENCE [LARGE SCALE GENOMIC DNA]</scope>
    <source>
        <strain>ATCC VR-613 / Malish 7</strain>
    </source>
</reference>